<organism>
    <name type="scientific">Streptococcus pneumoniae (strain Hungary19A-6)</name>
    <dbReference type="NCBI Taxonomy" id="487214"/>
    <lineage>
        <taxon>Bacteria</taxon>
        <taxon>Bacillati</taxon>
        <taxon>Bacillota</taxon>
        <taxon>Bacilli</taxon>
        <taxon>Lactobacillales</taxon>
        <taxon>Streptococcaceae</taxon>
        <taxon>Streptococcus</taxon>
    </lineage>
</organism>
<feature type="chain" id="PRO_1000120668" description="Small ribosomal subunit protein bS21">
    <location>
        <begin position="1"/>
        <end position="58"/>
    </location>
</feature>
<feature type="region of interest" description="Disordered" evidence="2">
    <location>
        <begin position="39"/>
        <end position="58"/>
    </location>
</feature>
<feature type="compositionally biased region" description="Basic residues" evidence="2">
    <location>
        <begin position="43"/>
        <end position="58"/>
    </location>
</feature>
<protein>
    <recommendedName>
        <fullName evidence="1">Small ribosomal subunit protein bS21</fullName>
    </recommendedName>
    <alternativeName>
        <fullName evidence="3">30S ribosomal protein S21</fullName>
    </alternativeName>
</protein>
<dbReference type="EMBL" id="CP000936">
    <property type="protein sequence ID" value="ACA36859.1"/>
    <property type="molecule type" value="Genomic_DNA"/>
</dbReference>
<dbReference type="RefSeq" id="WP_000048055.1">
    <property type="nucleotide sequence ID" value="NC_010380.1"/>
</dbReference>
<dbReference type="SMR" id="B1ICL4"/>
<dbReference type="GeneID" id="45653328"/>
<dbReference type="KEGG" id="spv:SPH_1545"/>
<dbReference type="HOGENOM" id="CLU_159258_3_2_9"/>
<dbReference type="Proteomes" id="UP000002163">
    <property type="component" value="Chromosome"/>
</dbReference>
<dbReference type="GO" id="GO:1990904">
    <property type="term" value="C:ribonucleoprotein complex"/>
    <property type="evidence" value="ECO:0007669"/>
    <property type="project" value="UniProtKB-KW"/>
</dbReference>
<dbReference type="GO" id="GO:0005840">
    <property type="term" value="C:ribosome"/>
    <property type="evidence" value="ECO:0007669"/>
    <property type="project" value="UniProtKB-KW"/>
</dbReference>
<dbReference type="GO" id="GO:0003735">
    <property type="term" value="F:structural constituent of ribosome"/>
    <property type="evidence" value="ECO:0007669"/>
    <property type="project" value="InterPro"/>
</dbReference>
<dbReference type="GO" id="GO:0006412">
    <property type="term" value="P:translation"/>
    <property type="evidence" value="ECO:0007669"/>
    <property type="project" value="UniProtKB-UniRule"/>
</dbReference>
<dbReference type="Gene3D" id="1.20.5.1150">
    <property type="entry name" value="Ribosomal protein S8"/>
    <property type="match status" value="1"/>
</dbReference>
<dbReference type="HAMAP" id="MF_00358">
    <property type="entry name" value="Ribosomal_bS21"/>
    <property type="match status" value="1"/>
</dbReference>
<dbReference type="InterPro" id="IPR001911">
    <property type="entry name" value="Ribosomal_bS21"/>
</dbReference>
<dbReference type="InterPro" id="IPR018278">
    <property type="entry name" value="Ribosomal_bS21_CS"/>
</dbReference>
<dbReference type="InterPro" id="IPR038380">
    <property type="entry name" value="Ribosomal_bS21_sf"/>
</dbReference>
<dbReference type="NCBIfam" id="TIGR00030">
    <property type="entry name" value="S21p"/>
    <property type="match status" value="1"/>
</dbReference>
<dbReference type="PANTHER" id="PTHR21109">
    <property type="entry name" value="MITOCHONDRIAL 28S RIBOSOMAL PROTEIN S21"/>
    <property type="match status" value="1"/>
</dbReference>
<dbReference type="PANTHER" id="PTHR21109:SF22">
    <property type="entry name" value="SMALL RIBOSOMAL SUBUNIT PROTEIN BS21"/>
    <property type="match status" value="1"/>
</dbReference>
<dbReference type="Pfam" id="PF01165">
    <property type="entry name" value="Ribosomal_S21"/>
    <property type="match status" value="1"/>
</dbReference>
<dbReference type="PRINTS" id="PR00976">
    <property type="entry name" value="RIBOSOMALS21"/>
</dbReference>
<dbReference type="PROSITE" id="PS01181">
    <property type="entry name" value="RIBOSOMAL_S21"/>
    <property type="match status" value="1"/>
</dbReference>
<accession>B1ICL4</accession>
<name>RS21_STRPI</name>
<keyword id="KW-0687">Ribonucleoprotein</keyword>
<keyword id="KW-0689">Ribosomal protein</keyword>
<proteinExistence type="inferred from homology"/>
<sequence>MSKTVVRKNESLDDALRRFKRAVTKAGTLQETRKREFYEKPSVKRKRKSEVARKRKKF</sequence>
<comment type="similarity">
    <text evidence="1">Belongs to the bacterial ribosomal protein bS21 family.</text>
</comment>
<gene>
    <name evidence="1" type="primary">rpsU</name>
    <name type="ordered locus">SPH_1545</name>
</gene>
<evidence type="ECO:0000255" key="1">
    <source>
        <dbReference type="HAMAP-Rule" id="MF_00358"/>
    </source>
</evidence>
<evidence type="ECO:0000256" key="2">
    <source>
        <dbReference type="SAM" id="MobiDB-lite"/>
    </source>
</evidence>
<evidence type="ECO:0000305" key="3"/>
<reference key="1">
    <citation type="journal article" date="2010" name="Genome Biol.">
        <title>Structure and dynamics of the pan-genome of Streptococcus pneumoniae and closely related species.</title>
        <authorList>
            <person name="Donati C."/>
            <person name="Hiller N.L."/>
            <person name="Tettelin H."/>
            <person name="Muzzi A."/>
            <person name="Croucher N.J."/>
            <person name="Angiuoli S.V."/>
            <person name="Oggioni M."/>
            <person name="Dunning Hotopp J.C."/>
            <person name="Hu F.Z."/>
            <person name="Riley D.R."/>
            <person name="Covacci A."/>
            <person name="Mitchell T.J."/>
            <person name="Bentley S.D."/>
            <person name="Kilian M."/>
            <person name="Ehrlich G.D."/>
            <person name="Rappuoli R."/>
            <person name="Moxon E.R."/>
            <person name="Masignani V."/>
        </authorList>
    </citation>
    <scope>NUCLEOTIDE SEQUENCE [LARGE SCALE GENOMIC DNA]</scope>
    <source>
        <strain>Hungary19A-6</strain>
    </source>
</reference>